<protein>
    <recommendedName>
        <fullName evidence="1">Penicillin-insensitive murein endopeptidase</fullName>
        <ecNumber evidence="1">3.4.24.-</ecNumber>
    </recommendedName>
    <alternativeName>
        <fullName evidence="1">D-alanyl-D-alanine-endopeptidase</fullName>
        <shortName evidence="1">DD-endopeptidase</shortName>
    </alternativeName>
</protein>
<gene>
    <name evidence="1" type="primary">mepA</name>
    <name type="ordered locus">EcE24377A_2623</name>
</gene>
<reference key="1">
    <citation type="journal article" date="2008" name="J. Bacteriol.">
        <title>The pangenome structure of Escherichia coli: comparative genomic analysis of E. coli commensal and pathogenic isolates.</title>
        <authorList>
            <person name="Rasko D.A."/>
            <person name="Rosovitz M.J."/>
            <person name="Myers G.S.A."/>
            <person name="Mongodin E.F."/>
            <person name="Fricke W.F."/>
            <person name="Gajer P."/>
            <person name="Crabtree J."/>
            <person name="Sebaihia M."/>
            <person name="Thomson N.R."/>
            <person name="Chaudhuri R."/>
            <person name="Henderson I.R."/>
            <person name="Sperandio V."/>
            <person name="Ravel J."/>
        </authorList>
    </citation>
    <scope>NUCLEOTIDE SEQUENCE [LARGE SCALE GENOMIC DNA]</scope>
    <source>
        <strain>E24377A / ETEC</strain>
    </source>
</reference>
<accession>A7ZPE4</accession>
<comment type="function">
    <text evidence="1">Murein endopeptidase that cleaves the D-alanyl-meso-2,6-diamino-pimelyl amide bond that connects peptidoglycan strands. Likely plays a role in the removal of murein from the sacculus.</text>
</comment>
<comment type="cofactor">
    <cofactor evidence="1">
        <name>Zn(2+)</name>
        <dbReference type="ChEBI" id="CHEBI:29105"/>
    </cofactor>
    <text evidence="1">Binds 2 Zn(2+) ions per subunit. Zn(2+) ion 1 is bound in the active site. Zn(2+) ion 2 is bound at the dimer interface by residues from both subunits.</text>
</comment>
<comment type="subunit">
    <text evidence="1">Dimer.</text>
</comment>
<comment type="subcellular location">
    <subcellularLocation>
        <location evidence="1">Periplasm</location>
    </subcellularLocation>
</comment>
<comment type="similarity">
    <text evidence="1">Belongs to the peptidase M74 family.</text>
</comment>
<dbReference type="EC" id="3.4.24.-" evidence="1"/>
<dbReference type="EMBL" id="CP000800">
    <property type="protein sequence ID" value="ABV18640.1"/>
    <property type="molecule type" value="Genomic_DNA"/>
</dbReference>
<dbReference type="RefSeq" id="WP_001043821.1">
    <property type="nucleotide sequence ID" value="NC_009801.1"/>
</dbReference>
<dbReference type="SMR" id="A7ZPE4"/>
<dbReference type="MEROPS" id="M74.001"/>
<dbReference type="GeneID" id="75202589"/>
<dbReference type="KEGG" id="ecw:EcE24377A_2623"/>
<dbReference type="HOGENOM" id="CLU_052496_0_0_6"/>
<dbReference type="Proteomes" id="UP000001122">
    <property type="component" value="Chromosome"/>
</dbReference>
<dbReference type="GO" id="GO:0030288">
    <property type="term" value="C:outer membrane-bounded periplasmic space"/>
    <property type="evidence" value="ECO:0007669"/>
    <property type="project" value="InterPro"/>
</dbReference>
<dbReference type="GO" id="GO:0046872">
    <property type="term" value="F:metal ion binding"/>
    <property type="evidence" value="ECO:0007669"/>
    <property type="project" value="UniProtKB-KW"/>
</dbReference>
<dbReference type="GO" id="GO:0004222">
    <property type="term" value="F:metalloendopeptidase activity"/>
    <property type="evidence" value="ECO:0007669"/>
    <property type="project" value="UniProtKB-UniRule"/>
</dbReference>
<dbReference type="GO" id="GO:0004252">
    <property type="term" value="F:serine-type endopeptidase activity"/>
    <property type="evidence" value="ECO:0007669"/>
    <property type="project" value="InterPro"/>
</dbReference>
<dbReference type="GO" id="GO:0000270">
    <property type="term" value="P:peptidoglycan metabolic process"/>
    <property type="evidence" value="ECO:0007669"/>
    <property type="project" value="UniProtKB-UniRule"/>
</dbReference>
<dbReference type="GO" id="GO:0006508">
    <property type="term" value="P:proteolysis"/>
    <property type="evidence" value="ECO:0007669"/>
    <property type="project" value="UniProtKB-KW"/>
</dbReference>
<dbReference type="FunFam" id="3.30.1380.10:FF:000002">
    <property type="entry name" value="Penicillin-insensitive murein endopeptidase"/>
    <property type="match status" value="1"/>
</dbReference>
<dbReference type="Gene3D" id="3.30.1380.10">
    <property type="match status" value="1"/>
</dbReference>
<dbReference type="HAMAP" id="MF_01623">
    <property type="entry name" value="MepA"/>
    <property type="match status" value="1"/>
</dbReference>
<dbReference type="InterPro" id="IPR009045">
    <property type="entry name" value="Hedgehog_sig/DD-Pept_Zn-bd_sf"/>
</dbReference>
<dbReference type="InterPro" id="IPR005073">
    <property type="entry name" value="Peptidase_M74"/>
</dbReference>
<dbReference type="NCBIfam" id="NF006947">
    <property type="entry name" value="PRK09429.1"/>
    <property type="match status" value="1"/>
</dbReference>
<dbReference type="Pfam" id="PF03411">
    <property type="entry name" value="Peptidase_M74"/>
    <property type="match status" value="1"/>
</dbReference>
<dbReference type="PIRSF" id="PIRSF018455">
    <property type="entry name" value="MepA"/>
    <property type="match status" value="1"/>
</dbReference>
<dbReference type="SUPFAM" id="SSF55166">
    <property type="entry name" value="Hedgehog/DD-peptidase"/>
    <property type="match status" value="1"/>
</dbReference>
<feature type="signal peptide" evidence="1">
    <location>
        <begin position="1"/>
        <end position="19"/>
    </location>
</feature>
<feature type="chain" id="PRO_1000069596" description="Penicillin-insensitive murein endopeptidase">
    <location>
        <begin position="20"/>
        <end position="274"/>
    </location>
</feature>
<feature type="region of interest" description="Disordered" evidence="2">
    <location>
        <begin position="227"/>
        <end position="274"/>
    </location>
</feature>
<feature type="binding site" evidence="1">
    <location>
        <position position="110"/>
    </location>
    <ligand>
        <name>Zn(2+)</name>
        <dbReference type="ChEBI" id="CHEBI:29105"/>
        <label>1</label>
    </ligand>
</feature>
<feature type="binding site" evidence="1">
    <location>
        <position position="113"/>
    </location>
    <ligand>
        <name>Zn(2+)</name>
        <dbReference type="ChEBI" id="CHEBI:29105"/>
        <label>1</label>
    </ligand>
</feature>
<feature type="binding site" evidence="1">
    <location>
        <position position="120"/>
    </location>
    <ligand>
        <name>Zn(2+)</name>
        <dbReference type="ChEBI" id="CHEBI:29105"/>
        <label>1</label>
    </ligand>
</feature>
<feature type="binding site" evidence="1">
    <location>
        <position position="147"/>
    </location>
    <ligand>
        <name>Zn(2+)</name>
        <dbReference type="ChEBI" id="CHEBI:29105"/>
        <label>2</label>
    </ligand>
</feature>
<feature type="binding site" evidence="1">
    <location>
        <position position="150"/>
    </location>
    <ligand>
        <name>Zn(2+)</name>
        <dbReference type="ChEBI" id="CHEBI:29105"/>
        <label>2</label>
    </ligand>
</feature>
<feature type="binding site" evidence="1">
    <location>
        <position position="211"/>
    </location>
    <ligand>
        <name>Zn(2+)</name>
        <dbReference type="ChEBI" id="CHEBI:29105"/>
        <label>1</label>
    </ligand>
</feature>
<feature type="disulfide bond" evidence="1">
    <location>
        <begin position="44"/>
        <end position="265"/>
    </location>
</feature>
<feature type="disulfide bond" evidence="1">
    <location>
        <begin position="187"/>
        <end position="235"/>
    </location>
</feature>
<feature type="disulfide bond" evidence="1">
    <location>
        <begin position="216"/>
        <end position="223"/>
    </location>
</feature>
<evidence type="ECO:0000255" key="1">
    <source>
        <dbReference type="HAMAP-Rule" id="MF_01623"/>
    </source>
</evidence>
<evidence type="ECO:0000256" key="2">
    <source>
        <dbReference type="SAM" id="MobiDB-lite"/>
    </source>
</evidence>
<name>MEPA_ECO24</name>
<sequence>MNKTAIALLALLASSASLAATPWQKITQPVPGSAQSIGSFSNGCIVGADTLPIQSEHYQVMRTDQRRYFGHPDLVMFIQRLSSQVSNLGMGTVLIGDMGMPAGGRFNGGHASHQTGLDVDIFLQLPKTRWTSAQLLRPQALDLVSRDGKHVVSTLWKPEIFSLIKLAAQDKDVTRIFVNPAIKQQLCLDAGTDRDWLRKVRPWFQHRAHMHVRLRCPADSLECEDQPLPPPGDGCGAELQSWFEPPKPGTTKPEKKTPPPLPPSCQALLDEHVI</sequence>
<proteinExistence type="inferred from homology"/>
<keyword id="KW-1015">Disulfide bond</keyword>
<keyword id="KW-0378">Hydrolase</keyword>
<keyword id="KW-0479">Metal-binding</keyword>
<keyword id="KW-0482">Metalloprotease</keyword>
<keyword id="KW-0574">Periplasm</keyword>
<keyword id="KW-0645">Protease</keyword>
<keyword id="KW-1185">Reference proteome</keyword>
<keyword id="KW-0732">Signal</keyword>
<keyword id="KW-0862">Zinc</keyword>
<organism>
    <name type="scientific">Escherichia coli O139:H28 (strain E24377A / ETEC)</name>
    <dbReference type="NCBI Taxonomy" id="331111"/>
    <lineage>
        <taxon>Bacteria</taxon>
        <taxon>Pseudomonadati</taxon>
        <taxon>Pseudomonadota</taxon>
        <taxon>Gammaproteobacteria</taxon>
        <taxon>Enterobacterales</taxon>
        <taxon>Enterobacteriaceae</taxon>
        <taxon>Escherichia</taxon>
    </lineage>
</organism>